<dbReference type="EMBL" id="CP000439">
    <property type="protein sequence ID" value="ABK90210.1"/>
    <property type="molecule type" value="Genomic_DNA"/>
</dbReference>
<dbReference type="RefSeq" id="WP_003016134.1">
    <property type="nucleotide sequence ID" value="NZ_CP009633.1"/>
</dbReference>
<dbReference type="SMR" id="A0Q7J5"/>
<dbReference type="GeneID" id="75264932"/>
<dbReference type="KEGG" id="ftn:FTN_1335"/>
<dbReference type="KEGG" id="ftx:AW25_668"/>
<dbReference type="BioCyc" id="FTUL401614:G1G75-1380-MONOMER"/>
<dbReference type="Proteomes" id="UP000000762">
    <property type="component" value="Chromosome"/>
</dbReference>
<dbReference type="GO" id="GO:0015934">
    <property type="term" value="C:large ribosomal subunit"/>
    <property type="evidence" value="ECO:0007669"/>
    <property type="project" value="InterPro"/>
</dbReference>
<dbReference type="GO" id="GO:0003735">
    <property type="term" value="F:structural constituent of ribosome"/>
    <property type="evidence" value="ECO:0007669"/>
    <property type="project" value="InterPro"/>
</dbReference>
<dbReference type="GO" id="GO:0006412">
    <property type="term" value="P:translation"/>
    <property type="evidence" value="ECO:0007669"/>
    <property type="project" value="UniProtKB-UniRule"/>
</dbReference>
<dbReference type="HAMAP" id="MF_00340">
    <property type="entry name" value="Ribosomal_bL32"/>
    <property type="match status" value="1"/>
</dbReference>
<dbReference type="InterPro" id="IPR002677">
    <property type="entry name" value="Ribosomal_bL32"/>
</dbReference>
<dbReference type="InterPro" id="IPR044957">
    <property type="entry name" value="Ribosomal_bL32_bact"/>
</dbReference>
<dbReference type="InterPro" id="IPR011332">
    <property type="entry name" value="Ribosomal_zn-bd"/>
</dbReference>
<dbReference type="NCBIfam" id="TIGR01031">
    <property type="entry name" value="rpmF_bact"/>
    <property type="match status" value="1"/>
</dbReference>
<dbReference type="PANTHER" id="PTHR35534">
    <property type="entry name" value="50S RIBOSOMAL PROTEIN L32"/>
    <property type="match status" value="1"/>
</dbReference>
<dbReference type="PANTHER" id="PTHR35534:SF1">
    <property type="entry name" value="LARGE RIBOSOMAL SUBUNIT PROTEIN BL32"/>
    <property type="match status" value="1"/>
</dbReference>
<dbReference type="Pfam" id="PF01783">
    <property type="entry name" value="Ribosomal_L32p"/>
    <property type="match status" value="1"/>
</dbReference>
<dbReference type="SUPFAM" id="SSF57829">
    <property type="entry name" value="Zn-binding ribosomal proteins"/>
    <property type="match status" value="1"/>
</dbReference>
<name>RL32_FRATN</name>
<keyword id="KW-0687">Ribonucleoprotein</keyword>
<keyword id="KW-0689">Ribosomal protein</keyword>
<comment type="similarity">
    <text evidence="1">Belongs to the bacterial ribosomal protein bL32 family.</text>
</comment>
<protein>
    <recommendedName>
        <fullName evidence="1">Large ribosomal subunit protein bL32</fullName>
    </recommendedName>
    <alternativeName>
        <fullName evidence="3">50S ribosomal protein L32</fullName>
    </alternativeName>
</protein>
<evidence type="ECO:0000255" key="1">
    <source>
        <dbReference type="HAMAP-Rule" id="MF_00340"/>
    </source>
</evidence>
<evidence type="ECO:0000256" key="2">
    <source>
        <dbReference type="SAM" id="MobiDB-lite"/>
    </source>
</evidence>
<evidence type="ECO:0000305" key="3"/>
<organism>
    <name type="scientific">Francisella tularensis subsp. novicida (strain U112)</name>
    <dbReference type="NCBI Taxonomy" id="401614"/>
    <lineage>
        <taxon>Bacteria</taxon>
        <taxon>Pseudomonadati</taxon>
        <taxon>Pseudomonadota</taxon>
        <taxon>Gammaproteobacteria</taxon>
        <taxon>Thiotrichales</taxon>
        <taxon>Francisellaceae</taxon>
        <taxon>Francisella</taxon>
    </lineage>
</organism>
<reference key="1">
    <citation type="journal article" date="2007" name="Genome Biol.">
        <title>Comparison of Francisella tularensis genomes reveals evolutionary events associated with the emergence of human pathogenic strains.</title>
        <authorList>
            <person name="Rohmer L."/>
            <person name="Fong C."/>
            <person name="Abmayr S."/>
            <person name="Wasnick M."/>
            <person name="Larson Freeman T.J."/>
            <person name="Radey M."/>
            <person name="Guina T."/>
            <person name="Svensson K."/>
            <person name="Hayden H.S."/>
            <person name="Jacobs M."/>
            <person name="Gallagher L.A."/>
            <person name="Manoil C."/>
            <person name="Ernst R.K."/>
            <person name="Drees B."/>
            <person name="Buckley D."/>
            <person name="Haugen E."/>
            <person name="Bovee D."/>
            <person name="Zhou Y."/>
            <person name="Chang J."/>
            <person name="Levy R."/>
            <person name="Lim R."/>
            <person name="Gillett W."/>
            <person name="Guenthener D."/>
            <person name="Kang A."/>
            <person name="Shaffer S.A."/>
            <person name="Taylor G."/>
            <person name="Chen J."/>
            <person name="Gallis B."/>
            <person name="D'Argenio D.A."/>
            <person name="Forsman M."/>
            <person name="Olson M.V."/>
            <person name="Goodlett D.R."/>
            <person name="Kaul R."/>
            <person name="Miller S.I."/>
            <person name="Brittnacher M.J."/>
        </authorList>
    </citation>
    <scope>NUCLEOTIDE SEQUENCE [LARGE SCALE GENOMIC DNA]</scope>
    <source>
        <strain>U112</strain>
    </source>
</reference>
<accession>A0Q7J5</accession>
<sequence length="60" mass="6879">MAVQQVKKSRSKRDMRRSHDSLTNPTLSTDKSTGELHLRHHVSPNGFYKGRKVVDTKSED</sequence>
<gene>
    <name evidence="1" type="primary">rpmF</name>
    <name type="ordered locus">FTN_1335</name>
</gene>
<proteinExistence type="inferred from homology"/>
<feature type="chain" id="PRO_0000296466" description="Large ribosomal subunit protein bL32">
    <location>
        <begin position="1"/>
        <end position="60"/>
    </location>
</feature>
<feature type="region of interest" description="Disordered" evidence="2">
    <location>
        <begin position="1"/>
        <end position="60"/>
    </location>
</feature>
<feature type="compositionally biased region" description="Basic residues" evidence="2">
    <location>
        <begin position="7"/>
        <end position="16"/>
    </location>
</feature>
<feature type="compositionally biased region" description="Polar residues" evidence="2">
    <location>
        <begin position="22"/>
        <end position="31"/>
    </location>
</feature>